<sequence>MKKDIHPEYRPVVFMDTSTGYQFLSGSTKTSKETVEFEGETYPLIRVEISSDSHPFYTGRQKFTQADGRVDRFNKKYGLK</sequence>
<organism>
    <name type="scientific">Streptococcus mutans serotype c (strain ATCC 700610 / UA159)</name>
    <dbReference type="NCBI Taxonomy" id="210007"/>
    <lineage>
        <taxon>Bacteria</taxon>
        <taxon>Bacillati</taxon>
        <taxon>Bacillota</taxon>
        <taxon>Bacilli</taxon>
        <taxon>Lactobacillales</taxon>
        <taxon>Streptococcaceae</taxon>
        <taxon>Streptococcus</taxon>
    </lineage>
</organism>
<keyword id="KW-1185">Reference proteome</keyword>
<keyword id="KW-0687">Ribonucleoprotein</keyword>
<keyword id="KW-0689">Ribosomal protein</keyword>
<name>RL31B_STRMU</name>
<proteinExistence type="evidence at transcript level"/>
<gene>
    <name evidence="1" type="primary">rpmE2</name>
    <name type="synonym">rl31</name>
    <name type="ordered locus">SMU_1298</name>
</gene>
<dbReference type="EMBL" id="AE014133">
    <property type="protein sequence ID" value="AAN58975.1"/>
    <property type="molecule type" value="Genomic_DNA"/>
</dbReference>
<dbReference type="RefSeq" id="NP_721669.1">
    <property type="nucleotide sequence ID" value="NC_004350.2"/>
</dbReference>
<dbReference type="RefSeq" id="WP_002263148.1">
    <property type="nucleotide sequence ID" value="NC_004350.2"/>
</dbReference>
<dbReference type="SMR" id="Q8DTN5"/>
<dbReference type="STRING" id="210007.SMU_1298"/>
<dbReference type="KEGG" id="smu:SMU_1298"/>
<dbReference type="PATRIC" id="fig|210007.7.peg.1163"/>
<dbReference type="eggNOG" id="COG0254">
    <property type="taxonomic scope" value="Bacteria"/>
</dbReference>
<dbReference type="HOGENOM" id="CLU_114306_2_2_9"/>
<dbReference type="OrthoDB" id="9803251at2"/>
<dbReference type="PhylomeDB" id="Q8DTN5"/>
<dbReference type="Proteomes" id="UP000002512">
    <property type="component" value="Chromosome"/>
</dbReference>
<dbReference type="GO" id="GO:1990904">
    <property type="term" value="C:ribonucleoprotein complex"/>
    <property type="evidence" value="ECO:0007669"/>
    <property type="project" value="UniProtKB-KW"/>
</dbReference>
<dbReference type="GO" id="GO:0005840">
    <property type="term" value="C:ribosome"/>
    <property type="evidence" value="ECO:0007669"/>
    <property type="project" value="UniProtKB-KW"/>
</dbReference>
<dbReference type="GO" id="GO:0003735">
    <property type="term" value="F:structural constituent of ribosome"/>
    <property type="evidence" value="ECO:0007669"/>
    <property type="project" value="InterPro"/>
</dbReference>
<dbReference type="GO" id="GO:0006412">
    <property type="term" value="P:translation"/>
    <property type="evidence" value="ECO:0007669"/>
    <property type="project" value="UniProtKB-UniRule"/>
</dbReference>
<dbReference type="Gene3D" id="4.10.830.30">
    <property type="entry name" value="Ribosomal protein L31"/>
    <property type="match status" value="1"/>
</dbReference>
<dbReference type="HAMAP" id="MF_00502">
    <property type="entry name" value="Ribosomal_bL31_2"/>
    <property type="match status" value="1"/>
</dbReference>
<dbReference type="InterPro" id="IPR034704">
    <property type="entry name" value="Ribosomal_bL28/bL31-like_sf"/>
</dbReference>
<dbReference type="InterPro" id="IPR002150">
    <property type="entry name" value="Ribosomal_bL31"/>
</dbReference>
<dbReference type="InterPro" id="IPR027493">
    <property type="entry name" value="Ribosomal_bL31_B"/>
</dbReference>
<dbReference type="InterPro" id="IPR042105">
    <property type="entry name" value="Ribosomal_bL31_sf"/>
</dbReference>
<dbReference type="NCBIfam" id="TIGR00105">
    <property type="entry name" value="L31"/>
    <property type="match status" value="1"/>
</dbReference>
<dbReference type="NCBIfam" id="NF002462">
    <property type="entry name" value="PRK01678.1"/>
    <property type="match status" value="1"/>
</dbReference>
<dbReference type="PANTHER" id="PTHR33280">
    <property type="entry name" value="50S RIBOSOMAL PROTEIN L31, CHLOROPLASTIC"/>
    <property type="match status" value="1"/>
</dbReference>
<dbReference type="PANTHER" id="PTHR33280:SF1">
    <property type="entry name" value="LARGE RIBOSOMAL SUBUNIT PROTEIN BL31C"/>
    <property type="match status" value="1"/>
</dbReference>
<dbReference type="Pfam" id="PF01197">
    <property type="entry name" value="Ribosomal_L31"/>
    <property type="match status" value="1"/>
</dbReference>
<dbReference type="PRINTS" id="PR01249">
    <property type="entry name" value="RIBOSOMALL31"/>
</dbReference>
<dbReference type="SUPFAM" id="SSF143800">
    <property type="entry name" value="L28p-like"/>
    <property type="match status" value="1"/>
</dbReference>
<dbReference type="PROSITE" id="PS01143">
    <property type="entry name" value="RIBOSOMAL_L31"/>
    <property type="match status" value="1"/>
</dbReference>
<comment type="subunit">
    <text evidence="1">Part of the 50S ribosomal subunit.</text>
</comment>
<comment type="induction">
    <text>Part of the SMU_1296-SMU_1298 operon.</text>
</comment>
<comment type="similarity">
    <text evidence="1">Belongs to the bacterial ribosomal protein bL31 family. Type B subfamily.</text>
</comment>
<evidence type="ECO:0000255" key="1">
    <source>
        <dbReference type="HAMAP-Rule" id="MF_00502"/>
    </source>
</evidence>
<evidence type="ECO:0000305" key="2"/>
<reference key="1">
    <citation type="journal article" date="2002" name="Proc. Natl. Acad. Sci. U.S.A.">
        <title>Genome sequence of Streptococcus mutans UA159, a cariogenic dental pathogen.</title>
        <authorList>
            <person name="Ajdic D.J."/>
            <person name="McShan W.M."/>
            <person name="McLaughlin R.E."/>
            <person name="Savic G."/>
            <person name="Chang J."/>
            <person name="Carson M.B."/>
            <person name="Primeaux C."/>
            <person name="Tian R."/>
            <person name="Kenton S."/>
            <person name="Jia H.G."/>
            <person name="Lin S.P."/>
            <person name="Qian Y."/>
            <person name="Li S."/>
            <person name="Zhu H."/>
            <person name="Najar F.Z."/>
            <person name="Lai H."/>
            <person name="White J."/>
            <person name="Roe B.A."/>
            <person name="Ferretti J.J."/>
        </authorList>
    </citation>
    <scope>NUCLEOTIDE SEQUENCE [LARGE SCALE GENOMIC DNA]</scope>
    <source>
        <strain>ATCC 700610 / UA159</strain>
    </source>
</reference>
<reference key="2">
    <citation type="journal article" date="2009" name="J. Bacteriol.">
        <title>3'-Phosphoadenosine-5'-phosphate phosphatase activity is required for superoxide stress tolerance in Streptococcus mutans.</title>
        <authorList>
            <person name="Zhang J."/>
            <person name="Biswas I."/>
        </authorList>
    </citation>
    <scope>OPERON STRUCTURE</scope>
    <source>
        <strain>ATCC 700610 / UA159</strain>
    </source>
</reference>
<protein>
    <recommendedName>
        <fullName evidence="1">Large ribosomal subunit protein bL31B</fullName>
    </recommendedName>
    <alternativeName>
        <fullName evidence="2">50S ribosomal protein L31 type B</fullName>
    </alternativeName>
</protein>
<accession>Q8DTN5</accession>
<feature type="chain" id="PRO_0000173269" description="Large ribosomal subunit protein bL31B">
    <location>
        <begin position="1"/>
        <end position="80"/>
    </location>
</feature>